<evidence type="ECO:0000250" key="1"/>
<evidence type="ECO:0000255" key="2">
    <source>
        <dbReference type="PROSITE-ProRule" id="PRU10007"/>
    </source>
</evidence>
<evidence type="ECO:0000269" key="3">
    <source>
    </source>
</evidence>
<evidence type="ECO:0000305" key="4"/>
<reference key="1">
    <citation type="journal article" date="2002" name="Nature">
        <title>The genome sequence of Schizosaccharomyces pombe.</title>
        <authorList>
            <person name="Wood V."/>
            <person name="Gwilliam R."/>
            <person name="Rajandream M.A."/>
            <person name="Lyne M.H."/>
            <person name="Lyne R."/>
            <person name="Stewart A."/>
            <person name="Sgouros J.G."/>
            <person name="Peat N."/>
            <person name="Hayles J."/>
            <person name="Baker S.G."/>
            <person name="Basham D."/>
            <person name="Bowman S."/>
            <person name="Brooks K."/>
            <person name="Brown D."/>
            <person name="Brown S."/>
            <person name="Chillingworth T."/>
            <person name="Churcher C.M."/>
            <person name="Collins M."/>
            <person name="Connor R."/>
            <person name="Cronin A."/>
            <person name="Davis P."/>
            <person name="Feltwell T."/>
            <person name="Fraser A."/>
            <person name="Gentles S."/>
            <person name="Goble A."/>
            <person name="Hamlin N."/>
            <person name="Harris D.E."/>
            <person name="Hidalgo J."/>
            <person name="Hodgson G."/>
            <person name="Holroyd S."/>
            <person name="Hornsby T."/>
            <person name="Howarth S."/>
            <person name="Huckle E.J."/>
            <person name="Hunt S."/>
            <person name="Jagels K."/>
            <person name="James K.D."/>
            <person name="Jones L."/>
            <person name="Jones M."/>
            <person name="Leather S."/>
            <person name="McDonald S."/>
            <person name="McLean J."/>
            <person name="Mooney P."/>
            <person name="Moule S."/>
            <person name="Mungall K.L."/>
            <person name="Murphy L.D."/>
            <person name="Niblett D."/>
            <person name="Odell C."/>
            <person name="Oliver K."/>
            <person name="O'Neil S."/>
            <person name="Pearson D."/>
            <person name="Quail M.A."/>
            <person name="Rabbinowitsch E."/>
            <person name="Rutherford K.M."/>
            <person name="Rutter S."/>
            <person name="Saunders D."/>
            <person name="Seeger K."/>
            <person name="Sharp S."/>
            <person name="Skelton J."/>
            <person name="Simmonds M.N."/>
            <person name="Squares R."/>
            <person name="Squares S."/>
            <person name="Stevens K."/>
            <person name="Taylor K."/>
            <person name="Taylor R.G."/>
            <person name="Tivey A."/>
            <person name="Walsh S.V."/>
            <person name="Warren T."/>
            <person name="Whitehead S."/>
            <person name="Woodward J.R."/>
            <person name="Volckaert G."/>
            <person name="Aert R."/>
            <person name="Robben J."/>
            <person name="Grymonprez B."/>
            <person name="Weltjens I."/>
            <person name="Vanstreels E."/>
            <person name="Rieger M."/>
            <person name="Schaefer M."/>
            <person name="Mueller-Auer S."/>
            <person name="Gabel C."/>
            <person name="Fuchs M."/>
            <person name="Duesterhoeft A."/>
            <person name="Fritzc C."/>
            <person name="Holzer E."/>
            <person name="Moestl D."/>
            <person name="Hilbert H."/>
            <person name="Borzym K."/>
            <person name="Langer I."/>
            <person name="Beck A."/>
            <person name="Lehrach H."/>
            <person name="Reinhardt R."/>
            <person name="Pohl T.M."/>
            <person name="Eger P."/>
            <person name="Zimmermann W."/>
            <person name="Wedler H."/>
            <person name="Wambutt R."/>
            <person name="Purnelle B."/>
            <person name="Goffeau A."/>
            <person name="Cadieu E."/>
            <person name="Dreano S."/>
            <person name="Gloux S."/>
            <person name="Lelaure V."/>
            <person name="Mottier S."/>
            <person name="Galibert F."/>
            <person name="Aves S.J."/>
            <person name="Xiang Z."/>
            <person name="Hunt C."/>
            <person name="Moore K."/>
            <person name="Hurst S.M."/>
            <person name="Lucas M."/>
            <person name="Rochet M."/>
            <person name="Gaillardin C."/>
            <person name="Tallada V.A."/>
            <person name="Garzon A."/>
            <person name="Thode G."/>
            <person name="Daga R.R."/>
            <person name="Cruzado L."/>
            <person name="Jimenez J."/>
            <person name="Sanchez M."/>
            <person name="del Rey F."/>
            <person name="Benito J."/>
            <person name="Dominguez A."/>
            <person name="Revuelta J.L."/>
            <person name="Moreno S."/>
            <person name="Armstrong J."/>
            <person name="Forsburg S.L."/>
            <person name="Cerutti L."/>
            <person name="Lowe T."/>
            <person name="McCombie W.R."/>
            <person name="Paulsen I."/>
            <person name="Potashkin J."/>
            <person name="Shpakovski G.V."/>
            <person name="Ussery D."/>
            <person name="Barrell B.G."/>
            <person name="Nurse P."/>
        </authorList>
    </citation>
    <scope>NUCLEOTIDE SEQUENCE [LARGE SCALE GENOMIC DNA]</scope>
    <source>
        <strain>972 / ATCC 24843</strain>
    </source>
</reference>
<reference key="2">
    <citation type="journal article" date="2006" name="Nat. Biotechnol.">
        <title>ORFeome cloning and global analysis of protein localization in the fission yeast Schizosaccharomyces pombe.</title>
        <authorList>
            <person name="Matsuyama A."/>
            <person name="Arai R."/>
            <person name="Yashiroda Y."/>
            <person name="Shirai A."/>
            <person name="Kamata A."/>
            <person name="Sekido S."/>
            <person name="Kobayashi Y."/>
            <person name="Hashimoto A."/>
            <person name="Hamamoto M."/>
            <person name="Hiraoka Y."/>
            <person name="Horinouchi S."/>
            <person name="Yoshida M."/>
        </authorList>
    </citation>
    <scope>SUBCELLULAR LOCATION [LARGE SCALE ANALYSIS]</scope>
</reference>
<protein>
    <recommendedName>
        <fullName>Putative aldehyde dehydrogenase-like protein C922.07c</fullName>
        <ecNumber>1.2.1.-</ecNumber>
    </recommendedName>
</protein>
<sequence length="496" mass="54028">MSEDLFVSINFPNGKSVKQPIGLYINGEWHKSAETWETVDPSIEEVIAKVYLAGEKEIDYAVKSAKEAFKTWKKVPGSEKGELLMKLAELTEKHADTLAAIEAMDSGKPLVSNARGDVDGTIALLRYCAGWADKIYGQVIPTGPEKLAYAKRTPIGVCGQIVPWNYPLNMAGWKIAPALAAGNCIIIKSAETTPLSLLYFATLVEEAGFPKGVVNIISGLGTVAGSYMAKHPGIDKIAFTGSTKVGVIVQQLAASNLKAVTLECGGKSPFLVFEDADLDQAVKWAALGIMYNSGQICTSNSRIYVQDSVYDKFIELFKKHVIQDYIVGMPFDDNTVVGPVVNKTQYNRIKNYIEQGKKEGAKLVLGDEPLPLKQGYFISPTIFADCSENMTIVKEEIFGPVVAISKFKTEDEAIEKANNTTYGLAAMCFTKDLERAHRVSDELEAGMVFINSTENSDIQAPFGGIKMSGIGNELGSNGIEMYTQIKAVHINFNNKL</sequence>
<dbReference type="EC" id="1.2.1.-"/>
<dbReference type="EMBL" id="CU329670">
    <property type="protein sequence ID" value="CAB63554.1"/>
    <property type="molecule type" value="Genomic_DNA"/>
</dbReference>
<dbReference type="PIR" id="T50272">
    <property type="entry name" value="T50272"/>
</dbReference>
<dbReference type="SMR" id="Q9URW9"/>
<dbReference type="BioGRID" id="280073">
    <property type="interactions" value="7"/>
</dbReference>
<dbReference type="FunCoup" id="Q9URW9">
    <property type="interactions" value="241"/>
</dbReference>
<dbReference type="STRING" id="284812.Q9URW9"/>
<dbReference type="PaxDb" id="4896-SPAC922.07c.1"/>
<dbReference type="EnsemblFungi" id="SPAC922.07c.1">
    <property type="protein sequence ID" value="SPAC922.07c.1:pep"/>
    <property type="gene ID" value="SPAC922.07c"/>
</dbReference>
<dbReference type="KEGG" id="spo:2543659"/>
<dbReference type="PomBase" id="SPAC922.07c"/>
<dbReference type="VEuPathDB" id="FungiDB:SPAC922.07c"/>
<dbReference type="eggNOG" id="KOG2450">
    <property type="taxonomic scope" value="Eukaryota"/>
</dbReference>
<dbReference type="HOGENOM" id="CLU_005391_0_1_1"/>
<dbReference type="InParanoid" id="Q9URW9"/>
<dbReference type="OMA" id="GTYAINW"/>
<dbReference type="PhylomeDB" id="Q9URW9"/>
<dbReference type="PRO" id="PR:Q9URW9"/>
<dbReference type="Proteomes" id="UP000002485">
    <property type="component" value="Chromosome I"/>
</dbReference>
<dbReference type="GO" id="GO:0005829">
    <property type="term" value="C:cytosol"/>
    <property type="evidence" value="ECO:0007005"/>
    <property type="project" value="PomBase"/>
</dbReference>
<dbReference type="GO" id="GO:0005634">
    <property type="term" value="C:nucleus"/>
    <property type="evidence" value="ECO:0007005"/>
    <property type="project" value="PomBase"/>
</dbReference>
<dbReference type="GO" id="GO:0004029">
    <property type="term" value="F:aldehyde dehydrogenase (NAD+) activity"/>
    <property type="evidence" value="ECO:0000318"/>
    <property type="project" value="GO_Central"/>
</dbReference>
<dbReference type="GO" id="GO:0006081">
    <property type="term" value="P:aldehyde metabolic process"/>
    <property type="evidence" value="ECO:0000305"/>
    <property type="project" value="PomBase"/>
</dbReference>
<dbReference type="GO" id="GO:0019483">
    <property type="term" value="P:beta-alanine biosynthetic process"/>
    <property type="evidence" value="ECO:0000266"/>
    <property type="project" value="PomBase"/>
</dbReference>
<dbReference type="GO" id="GO:0006598">
    <property type="term" value="P:polyamine catabolic process"/>
    <property type="evidence" value="ECO:0000318"/>
    <property type="project" value="GO_Central"/>
</dbReference>
<dbReference type="CDD" id="cd07144">
    <property type="entry name" value="ALDH_ALD2-YMR170C"/>
    <property type="match status" value="1"/>
</dbReference>
<dbReference type="FunFam" id="3.40.605.10:FF:000001">
    <property type="entry name" value="Aldehyde dehydrogenase 1"/>
    <property type="match status" value="1"/>
</dbReference>
<dbReference type="FunFam" id="3.40.309.10:FF:000012">
    <property type="entry name" value="Betaine aldehyde dehydrogenase"/>
    <property type="match status" value="1"/>
</dbReference>
<dbReference type="Gene3D" id="3.40.605.10">
    <property type="entry name" value="Aldehyde Dehydrogenase, Chain A, domain 1"/>
    <property type="match status" value="1"/>
</dbReference>
<dbReference type="Gene3D" id="3.40.309.10">
    <property type="entry name" value="Aldehyde Dehydrogenase, Chain A, domain 2"/>
    <property type="match status" value="1"/>
</dbReference>
<dbReference type="InterPro" id="IPR016161">
    <property type="entry name" value="Ald_DH/histidinol_DH"/>
</dbReference>
<dbReference type="InterPro" id="IPR016163">
    <property type="entry name" value="Ald_DH_C"/>
</dbReference>
<dbReference type="InterPro" id="IPR029510">
    <property type="entry name" value="Ald_DH_CS_GLU"/>
</dbReference>
<dbReference type="InterPro" id="IPR016162">
    <property type="entry name" value="Ald_DH_N"/>
</dbReference>
<dbReference type="InterPro" id="IPR015590">
    <property type="entry name" value="Aldehyde_DH_dom"/>
</dbReference>
<dbReference type="PANTHER" id="PTHR43720">
    <property type="entry name" value="2-AMINOMUCONIC SEMIALDEHYDE DEHYDROGENASE"/>
    <property type="match status" value="1"/>
</dbReference>
<dbReference type="PANTHER" id="PTHR43720:SF2">
    <property type="entry name" value="2-AMINOMUCONIC SEMIALDEHYDE DEHYDROGENASE"/>
    <property type="match status" value="1"/>
</dbReference>
<dbReference type="Pfam" id="PF00171">
    <property type="entry name" value="Aldedh"/>
    <property type="match status" value="1"/>
</dbReference>
<dbReference type="SUPFAM" id="SSF53720">
    <property type="entry name" value="ALDH-like"/>
    <property type="match status" value="1"/>
</dbReference>
<dbReference type="PROSITE" id="PS00687">
    <property type="entry name" value="ALDEHYDE_DEHYDR_GLU"/>
    <property type="match status" value="1"/>
</dbReference>
<organism>
    <name type="scientific">Schizosaccharomyces pombe (strain 972 / ATCC 24843)</name>
    <name type="common">Fission yeast</name>
    <dbReference type="NCBI Taxonomy" id="284812"/>
    <lineage>
        <taxon>Eukaryota</taxon>
        <taxon>Fungi</taxon>
        <taxon>Dikarya</taxon>
        <taxon>Ascomycota</taxon>
        <taxon>Taphrinomycotina</taxon>
        <taxon>Schizosaccharomycetes</taxon>
        <taxon>Schizosaccharomycetales</taxon>
        <taxon>Schizosaccharomycetaceae</taxon>
        <taxon>Schizosaccharomyces</taxon>
    </lineage>
</organism>
<proteinExistence type="inferred from homology"/>
<gene>
    <name type="ORF">SPAC922.07c</name>
</gene>
<keyword id="KW-0963">Cytoplasm</keyword>
<keyword id="KW-0520">NAD</keyword>
<keyword id="KW-0539">Nucleus</keyword>
<keyword id="KW-0560">Oxidoreductase</keyword>
<keyword id="KW-1185">Reference proteome</keyword>
<name>YLX7_SCHPO</name>
<accession>Q9URW9</accession>
<comment type="subcellular location">
    <subcellularLocation>
        <location evidence="3">Cytoplasm</location>
    </subcellularLocation>
    <subcellularLocation>
        <location evidence="3">Nucleus</location>
    </subcellularLocation>
</comment>
<comment type="similarity">
    <text evidence="4">Belongs to the aldehyde dehydrogenase family.</text>
</comment>
<feature type="chain" id="PRO_0000310349" description="Putative aldehyde dehydrogenase-like protein C922.07c">
    <location>
        <begin position="1"/>
        <end position="496"/>
    </location>
</feature>
<feature type="active site" description="Proton acceptor" evidence="2">
    <location>
        <position position="263"/>
    </location>
</feature>
<feature type="active site" description="Nucleophile" evidence="2">
    <location>
        <position position="297"/>
    </location>
</feature>
<feature type="binding site" evidence="1">
    <location>
        <begin position="241"/>
        <end position="246"/>
    </location>
    <ligand>
        <name>NAD(+)</name>
        <dbReference type="ChEBI" id="CHEBI:57540"/>
    </ligand>
</feature>
<feature type="site" description="Transition state stabilizer" evidence="1">
    <location>
        <position position="165"/>
    </location>
</feature>